<reference key="1">
    <citation type="submission" date="2004-06" db="EMBL/GenBank/DDBJ databases">
        <authorList>
            <consortium name="NIH - Xenopus Gene Collection (XGC) project"/>
        </authorList>
    </citation>
    <scope>NUCLEOTIDE SEQUENCE [LARGE SCALE MRNA]</scope>
    <source>
        <tissue>Embryo</tissue>
    </source>
</reference>
<gene>
    <name type="primary">znf652-b</name>
</gene>
<comment type="function">
    <text>May be involved in transcriptional regulation.</text>
</comment>
<comment type="subcellular location">
    <subcellularLocation>
        <location evidence="3">Nucleus</location>
    </subcellularLocation>
</comment>
<comment type="similarity">
    <text evidence="3">Belongs to the krueppel C2H2-type zinc-finger protein family.</text>
</comment>
<feature type="chain" id="PRO_0000280432" description="Zinc finger protein 652-B">
    <location>
        <begin position="1"/>
        <end position="602"/>
    </location>
</feature>
<feature type="zinc finger region" description="C2H2-type 1" evidence="1">
    <location>
        <begin position="235"/>
        <end position="258"/>
    </location>
</feature>
<feature type="zinc finger region" description="C2H2-type 2; degenerate" evidence="1">
    <location>
        <begin position="262"/>
        <end position="284"/>
    </location>
</feature>
<feature type="zinc finger region" description="C2H2-type 3" evidence="1">
    <location>
        <begin position="289"/>
        <end position="312"/>
    </location>
</feature>
<feature type="zinc finger region" description="C2H2-type 4" evidence="1">
    <location>
        <begin position="319"/>
        <end position="341"/>
    </location>
</feature>
<feature type="zinc finger region" description="C2H2-type 5" evidence="1">
    <location>
        <begin position="347"/>
        <end position="369"/>
    </location>
</feature>
<feature type="zinc finger region" description="C2H2-type 6" evidence="1">
    <location>
        <begin position="375"/>
        <end position="397"/>
    </location>
</feature>
<feature type="zinc finger region" description="C2H2-type 7" evidence="1">
    <location>
        <begin position="403"/>
        <end position="425"/>
    </location>
</feature>
<feature type="zinc finger region" description="C2H2-type 8" evidence="1">
    <location>
        <begin position="431"/>
        <end position="453"/>
    </location>
</feature>
<feature type="zinc finger region" description="C2H2-type 9; degenerate" evidence="1">
    <location>
        <begin position="459"/>
        <end position="482"/>
    </location>
</feature>
<feature type="region of interest" description="Disordered" evidence="2">
    <location>
        <begin position="60"/>
        <end position="232"/>
    </location>
</feature>
<feature type="region of interest" description="Disordered" evidence="2">
    <location>
        <begin position="543"/>
        <end position="575"/>
    </location>
</feature>
<feature type="compositionally biased region" description="Basic and acidic residues" evidence="2">
    <location>
        <begin position="65"/>
        <end position="79"/>
    </location>
</feature>
<feature type="compositionally biased region" description="Acidic residues" evidence="2">
    <location>
        <begin position="80"/>
        <end position="108"/>
    </location>
</feature>
<feature type="compositionally biased region" description="Acidic residues" evidence="2">
    <location>
        <begin position="148"/>
        <end position="167"/>
    </location>
</feature>
<feature type="compositionally biased region" description="Basic and acidic residues" evidence="2">
    <location>
        <begin position="222"/>
        <end position="232"/>
    </location>
</feature>
<feature type="compositionally biased region" description="Basic residues" evidence="2">
    <location>
        <begin position="545"/>
        <end position="557"/>
    </location>
</feature>
<feature type="compositionally biased region" description="Pro residues" evidence="2">
    <location>
        <begin position="561"/>
        <end position="571"/>
    </location>
</feature>
<sequence>MVVDDPCLLNIPTSFYHSTNQELDLSNKTFKREVGGPYSVMMDNKIGKPHLLETDQQNFFQDSKPTNEVHAVKGERENSGESEEEEDEDDDDDDDDDDDDEEGEDEDEVNYKREQIIVEVNLNNQTLNVSKGDKGVPKDPSQIKTSSDDEGGDSGEDDQDSHEDEENNPLPLDGQTNMQHGNQDQKTENSDMVGGDGTIPANSTKEQGKGGEAPKRKKKPKSPSDKAKSEEKETLTCDKCPRVFNTRWYLEKHMNVTHRRMQICDKCGKKFVLESELSLHLQTDCEKNIQCITCNKTFKKLWSLHEHIKIVHGYAEKKFSCEICEKKFYTMAHVRKHLVAHTKDMPFTCETCGKSFKRSMSLKVHSLQHSGEKPFRCENCDERFQYKYQLRSHMSIHIGHKQFMCQWCGKDFNMKQYFDEHMKTHTGEKPFICEICGKSFTSRPNMKRHRRTHTGEKPYPCDVCGMRFRFSNMLKAHKEKCFRVTSPVGVPPALQITLNNPTLSNPSQGISNLPNAHIPPPSPTPPLNLNALNPLPPRPIPHPFSHLHLHPHSHTHHLAVPPVPHLPPPPALFKSEALNHRGQNDDSFLRHLAEKTSAGQHH</sequence>
<keyword id="KW-0238">DNA-binding</keyword>
<keyword id="KW-0479">Metal-binding</keyword>
<keyword id="KW-0539">Nucleus</keyword>
<keyword id="KW-1185">Reference proteome</keyword>
<keyword id="KW-0677">Repeat</keyword>
<keyword id="KW-0804">Transcription</keyword>
<keyword id="KW-0805">Transcription regulation</keyword>
<keyword id="KW-0862">Zinc</keyword>
<keyword id="KW-0863">Zinc-finger</keyword>
<accession>Q6INV8</accession>
<name>Z652B_XENLA</name>
<evidence type="ECO:0000255" key="1">
    <source>
        <dbReference type="PROSITE-ProRule" id="PRU00042"/>
    </source>
</evidence>
<evidence type="ECO:0000256" key="2">
    <source>
        <dbReference type="SAM" id="MobiDB-lite"/>
    </source>
</evidence>
<evidence type="ECO:0000305" key="3"/>
<protein>
    <recommendedName>
        <fullName>Zinc finger protein 652-B</fullName>
    </recommendedName>
</protein>
<proteinExistence type="evidence at transcript level"/>
<organism>
    <name type="scientific">Xenopus laevis</name>
    <name type="common">African clawed frog</name>
    <dbReference type="NCBI Taxonomy" id="8355"/>
    <lineage>
        <taxon>Eukaryota</taxon>
        <taxon>Metazoa</taxon>
        <taxon>Chordata</taxon>
        <taxon>Craniata</taxon>
        <taxon>Vertebrata</taxon>
        <taxon>Euteleostomi</taxon>
        <taxon>Amphibia</taxon>
        <taxon>Batrachia</taxon>
        <taxon>Anura</taxon>
        <taxon>Pipoidea</taxon>
        <taxon>Pipidae</taxon>
        <taxon>Xenopodinae</taxon>
        <taxon>Xenopus</taxon>
        <taxon>Xenopus</taxon>
    </lineage>
</organism>
<dbReference type="EMBL" id="BC072164">
    <property type="protein sequence ID" value="AAH72164.1"/>
    <property type="molecule type" value="mRNA"/>
</dbReference>
<dbReference type="RefSeq" id="NP_001085209.1">
    <property type="nucleotide sequence ID" value="NM_001091740.1"/>
</dbReference>
<dbReference type="SMR" id="Q6INV8"/>
<dbReference type="GeneID" id="432303"/>
<dbReference type="KEGG" id="xla:432303"/>
<dbReference type="AGR" id="Xenbase:XB-GENE-1020916"/>
<dbReference type="CTD" id="432303"/>
<dbReference type="Xenbase" id="XB-GENE-1020916">
    <property type="gene designation" value="znf652.S"/>
</dbReference>
<dbReference type="OrthoDB" id="427030at2759"/>
<dbReference type="Proteomes" id="UP000186698">
    <property type="component" value="Chromosome 9_10S"/>
</dbReference>
<dbReference type="Bgee" id="432303">
    <property type="expression patterns" value="Expressed in internal ear and 19 other cell types or tissues"/>
</dbReference>
<dbReference type="GO" id="GO:0005634">
    <property type="term" value="C:nucleus"/>
    <property type="evidence" value="ECO:0000318"/>
    <property type="project" value="GO_Central"/>
</dbReference>
<dbReference type="GO" id="GO:0000981">
    <property type="term" value="F:DNA-binding transcription factor activity, RNA polymerase II-specific"/>
    <property type="evidence" value="ECO:0000318"/>
    <property type="project" value="GO_Central"/>
</dbReference>
<dbReference type="GO" id="GO:0000978">
    <property type="term" value="F:RNA polymerase II cis-regulatory region sequence-specific DNA binding"/>
    <property type="evidence" value="ECO:0007669"/>
    <property type="project" value="TreeGrafter"/>
</dbReference>
<dbReference type="GO" id="GO:0008270">
    <property type="term" value="F:zinc ion binding"/>
    <property type="evidence" value="ECO:0007669"/>
    <property type="project" value="UniProtKB-KW"/>
</dbReference>
<dbReference type="GO" id="GO:0006357">
    <property type="term" value="P:regulation of transcription by RNA polymerase II"/>
    <property type="evidence" value="ECO:0000318"/>
    <property type="project" value="GO_Central"/>
</dbReference>
<dbReference type="FunFam" id="3.30.160.60:FF:000900">
    <property type="entry name" value="Zinc finger and BTB domain containing 47"/>
    <property type="match status" value="1"/>
</dbReference>
<dbReference type="FunFam" id="3.30.160.60:FF:000312">
    <property type="entry name" value="Zinc finger and BTB domain-containing 47"/>
    <property type="match status" value="1"/>
</dbReference>
<dbReference type="FunFam" id="3.30.160.60:FF:000550">
    <property type="entry name" value="Zinc finger and BTB domain-containing 47"/>
    <property type="match status" value="1"/>
</dbReference>
<dbReference type="FunFam" id="3.30.160.60:FF:000166">
    <property type="entry name" value="Zinc finger and BTB domain-containing 49"/>
    <property type="match status" value="1"/>
</dbReference>
<dbReference type="FunFam" id="3.30.160.60:FF:001300">
    <property type="entry name" value="Zinc finger and BTB domain-containing protein 47"/>
    <property type="match status" value="1"/>
</dbReference>
<dbReference type="FunFam" id="3.30.160.60:FF:001378">
    <property type="entry name" value="Zinc finger protein 652"/>
    <property type="match status" value="1"/>
</dbReference>
<dbReference type="FunFam" id="3.30.160.60:FF:000284">
    <property type="entry name" value="Zinc finger protein 652 isoform X1"/>
    <property type="match status" value="1"/>
</dbReference>
<dbReference type="Gene3D" id="3.30.160.60">
    <property type="entry name" value="Classic Zinc Finger"/>
    <property type="match status" value="7"/>
</dbReference>
<dbReference type="InterPro" id="IPR050589">
    <property type="entry name" value="Ikaros_C2H2-ZF"/>
</dbReference>
<dbReference type="InterPro" id="IPR036236">
    <property type="entry name" value="Znf_C2H2_sf"/>
</dbReference>
<dbReference type="InterPro" id="IPR013087">
    <property type="entry name" value="Znf_C2H2_type"/>
</dbReference>
<dbReference type="PANTHER" id="PTHR24404:SF114">
    <property type="entry name" value="KLUMPFUSS, ISOFORM B-RELATED"/>
    <property type="match status" value="1"/>
</dbReference>
<dbReference type="PANTHER" id="PTHR24404">
    <property type="entry name" value="ZINC FINGER PROTEIN"/>
    <property type="match status" value="1"/>
</dbReference>
<dbReference type="Pfam" id="PF00096">
    <property type="entry name" value="zf-C2H2"/>
    <property type="match status" value="5"/>
</dbReference>
<dbReference type="SMART" id="SM00355">
    <property type="entry name" value="ZnF_C2H2"/>
    <property type="match status" value="9"/>
</dbReference>
<dbReference type="SUPFAM" id="SSF57667">
    <property type="entry name" value="beta-beta-alpha zinc fingers"/>
    <property type="match status" value="5"/>
</dbReference>
<dbReference type="PROSITE" id="PS00028">
    <property type="entry name" value="ZINC_FINGER_C2H2_1"/>
    <property type="match status" value="7"/>
</dbReference>
<dbReference type="PROSITE" id="PS50157">
    <property type="entry name" value="ZINC_FINGER_C2H2_2"/>
    <property type="match status" value="8"/>
</dbReference>